<proteinExistence type="evidence at protein level"/>
<evidence type="ECO:0000269" key="1">
    <source>
    </source>
</evidence>
<evidence type="ECO:0000303" key="2">
    <source>
    </source>
</evidence>
<evidence type="ECO:0000305" key="3"/>
<evidence type="ECO:0000305" key="4">
    <source>
    </source>
</evidence>
<reference key="1">
    <citation type="journal article" date="2018" name="J. Proteomics">
        <title>Profiling the short, linear, non-disulfide bond-containing peptidome from the venom of the scorpion Tityus obscurus.</title>
        <authorList>
            <person name="Dias N.B."/>
            <person name="de Souza B.M."/>
            <person name="Cocchi F.K."/>
            <person name="Chalkidis H.M."/>
            <person name="Dorce V.A.C."/>
            <person name="Palma M.S."/>
        </authorList>
    </citation>
    <scope>PROTEIN SEQUENCE</scope>
    <scope>IDENTIFICATION BY MASS SPECTROMETRY</scope>
    <scope>SUBCELLULAR LOCATION</scope>
    <scope>SYNTHESIS</scope>
    <scope>FUNCTION</scope>
    <scope>BIOASSAY</scope>
    <source>
        <tissue>Venom</tissue>
    </source>
</reference>
<name>CRY1_TITOB</name>
<protein>
    <recommendedName>
        <fullName evidence="2">Cryptide Pep-1</fullName>
    </recommendedName>
</protein>
<keyword id="KW-0204">Cytolysis</keyword>
<keyword id="KW-0903">Direct protein sequencing</keyword>
<keyword id="KW-0964">Secreted</keyword>
<dbReference type="GO" id="GO:0005576">
    <property type="term" value="C:extracellular region"/>
    <property type="evidence" value="ECO:0007669"/>
    <property type="project" value="UniProtKB-SubCell"/>
</dbReference>
<dbReference type="GO" id="GO:0031640">
    <property type="term" value="P:killing of cells of another organism"/>
    <property type="evidence" value="ECO:0007669"/>
    <property type="project" value="UniProtKB-KW"/>
</dbReference>
<comment type="function">
    <text evidence="1 4">May act to induce hypotension (Probable). Presents moderate hemolytic activity at physiological concentrations (micromolar range). Does not induce mast cell degranulation, lactate dehydrogenase (LDH) release from mast cells and antimicrobial effects. In vivo, injection into mice causes an increase in nociceptive sensibility, but causes very reduced or no edema formation. It also reduces mice locomotion, suggesting an increase in anxiety, but causes no alteration in rearing (standing on hind limbs) (PubMed:28918200).</text>
</comment>
<comment type="subcellular location">
    <subcellularLocation>
        <location evidence="1">Secreted</location>
    </subcellularLocation>
</comment>
<comment type="tissue specificity">
    <text evidence="4">Expressed by the venom gland.</text>
</comment>
<comment type="miscellaneous">
    <text evidence="3">The primary structure of this cryptide Pep-1 is identical to that of cryptide TyPep-1 from Tityus serrulatus (AC P84189).</text>
</comment>
<accession>P0DRE6</accession>
<feature type="peptide" id="PRO_0000461736" description="Cryptide Pep-1" evidence="1">
    <location>
        <begin position="1"/>
        <end position="16"/>
    </location>
</feature>
<sequence length="16" mass="1788">AEIDFSGIPEDIIKQI</sequence>
<organism>
    <name type="scientific">Tityus obscurus</name>
    <name type="common">Amazonian scorpion</name>
    <name type="synonym">Tityus cambridgei</name>
    <dbReference type="NCBI Taxonomy" id="1221240"/>
    <lineage>
        <taxon>Eukaryota</taxon>
        <taxon>Metazoa</taxon>
        <taxon>Ecdysozoa</taxon>
        <taxon>Arthropoda</taxon>
        <taxon>Chelicerata</taxon>
        <taxon>Arachnida</taxon>
        <taxon>Scorpiones</taxon>
        <taxon>Buthida</taxon>
        <taxon>Buthoidea</taxon>
        <taxon>Buthidae</taxon>
        <taxon>Tityus</taxon>
    </lineage>
</organism>